<gene>
    <name evidence="1" type="primary">rlmM</name>
    <name type="ordered locus">Sfri_2780</name>
</gene>
<reference key="1">
    <citation type="submission" date="2006-08" db="EMBL/GenBank/DDBJ databases">
        <title>Complete sequence of Shewanella frigidimarina NCIMB 400.</title>
        <authorList>
            <consortium name="US DOE Joint Genome Institute"/>
            <person name="Copeland A."/>
            <person name="Lucas S."/>
            <person name="Lapidus A."/>
            <person name="Barry K."/>
            <person name="Detter J.C."/>
            <person name="Glavina del Rio T."/>
            <person name="Hammon N."/>
            <person name="Israni S."/>
            <person name="Dalin E."/>
            <person name="Tice H."/>
            <person name="Pitluck S."/>
            <person name="Fredrickson J.K."/>
            <person name="Kolker E."/>
            <person name="McCuel L.A."/>
            <person name="DiChristina T."/>
            <person name="Nealson K.H."/>
            <person name="Newman D."/>
            <person name="Tiedje J.M."/>
            <person name="Zhou J."/>
            <person name="Romine M.F."/>
            <person name="Culley D.E."/>
            <person name="Serres M."/>
            <person name="Chertkov O."/>
            <person name="Brettin T."/>
            <person name="Bruce D."/>
            <person name="Han C."/>
            <person name="Tapia R."/>
            <person name="Gilna P."/>
            <person name="Schmutz J."/>
            <person name="Larimer F."/>
            <person name="Land M."/>
            <person name="Hauser L."/>
            <person name="Kyrpides N."/>
            <person name="Mikhailova N."/>
            <person name="Richardson P."/>
        </authorList>
    </citation>
    <scope>NUCLEOTIDE SEQUENCE [LARGE SCALE GENOMIC DNA]</scope>
    <source>
        <strain>NCIMB 400</strain>
    </source>
</reference>
<protein>
    <recommendedName>
        <fullName evidence="1">Ribosomal RNA large subunit methyltransferase M</fullName>
        <ecNumber evidence="1">2.1.1.186</ecNumber>
    </recommendedName>
    <alternativeName>
        <fullName evidence="1">23S rRNA (cytidine2498-2'-O)-methyltransferase</fullName>
    </alternativeName>
    <alternativeName>
        <fullName evidence="1">23S rRNA 2'-O-ribose methyltransferase RlmM</fullName>
    </alternativeName>
</protein>
<organism>
    <name type="scientific">Shewanella frigidimarina (strain NCIMB 400)</name>
    <dbReference type="NCBI Taxonomy" id="318167"/>
    <lineage>
        <taxon>Bacteria</taxon>
        <taxon>Pseudomonadati</taxon>
        <taxon>Pseudomonadota</taxon>
        <taxon>Gammaproteobacteria</taxon>
        <taxon>Alteromonadales</taxon>
        <taxon>Shewanellaceae</taxon>
        <taxon>Shewanella</taxon>
    </lineage>
</organism>
<keyword id="KW-0963">Cytoplasm</keyword>
<keyword id="KW-0489">Methyltransferase</keyword>
<keyword id="KW-1185">Reference proteome</keyword>
<keyword id="KW-0698">rRNA processing</keyword>
<keyword id="KW-0949">S-adenosyl-L-methionine</keyword>
<keyword id="KW-0808">Transferase</keyword>
<comment type="function">
    <text evidence="1">Catalyzes the 2'-O-methylation at nucleotide C2498 in 23S rRNA.</text>
</comment>
<comment type="catalytic activity">
    <reaction evidence="1">
        <text>cytidine(2498) in 23S rRNA + S-adenosyl-L-methionine = 2'-O-methylcytidine(2498) in 23S rRNA + S-adenosyl-L-homocysteine + H(+)</text>
        <dbReference type="Rhea" id="RHEA:42788"/>
        <dbReference type="Rhea" id="RHEA-COMP:10244"/>
        <dbReference type="Rhea" id="RHEA-COMP:10245"/>
        <dbReference type="ChEBI" id="CHEBI:15378"/>
        <dbReference type="ChEBI" id="CHEBI:57856"/>
        <dbReference type="ChEBI" id="CHEBI:59789"/>
        <dbReference type="ChEBI" id="CHEBI:74495"/>
        <dbReference type="ChEBI" id="CHEBI:82748"/>
        <dbReference type="EC" id="2.1.1.186"/>
    </reaction>
</comment>
<comment type="subunit">
    <text evidence="1">Monomer.</text>
</comment>
<comment type="subcellular location">
    <subcellularLocation>
        <location evidence="1">Cytoplasm</location>
    </subcellularLocation>
</comment>
<comment type="similarity">
    <text evidence="1">Belongs to the class I-like SAM-binding methyltransferase superfamily. RNA methyltransferase RlmE family. RlmM subfamily.</text>
</comment>
<dbReference type="EC" id="2.1.1.186" evidence="1"/>
<dbReference type="EMBL" id="CP000447">
    <property type="protein sequence ID" value="ABI72620.1"/>
    <property type="molecule type" value="Genomic_DNA"/>
</dbReference>
<dbReference type="RefSeq" id="WP_011638229.1">
    <property type="nucleotide sequence ID" value="NC_008345.1"/>
</dbReference>
<dbReference type="SMR" id="Q07ZE4"/>
<dbReference type="STRING" id="318167.Sfri_2780"/>
<dbReference type="KEGG" id="sfr:Sfri_2780"/>
<dbReference type="eggNOG" id="COG2933">
    <property type="taxonomic scope" value="Bacteria"/>
</dbReference>
<dbReference type="HOGENOM" id="CLU_043780_0_0_6"/>
<dbReference type="OrthoDB" id="154490at2"/>
<dbReference type="Proteomes" id="UP000000684">
    <property type="component" value="Chromosome"/>
</dbReference>
<dbReference type="GO" id="GO:0005737">
    <property type="term" value="C:cytoplasm"/>
    <property type="evidence" value="ECO:0007669"/>
    <property type="project" value="UniProtKB-SubCell"/>
</dbReference>
<dbReference type="GO" id="GO:0008757">
    <property type="term" value="F:S-adenosylmethionine-dependent methyltransferase activity"/>
    <property type="evidence" value="ECO:0007669"/>
    <property type="project" value="UniProtKB-UniRule"/>
</dbReference>
<dbReference type="GO" id="GO:0032259">
    <property type="term" value="P:methylation"/>
    <property type="evidence" value="ECO:0007669"/>
    <property type="project" value="UniProtKB-KW"/>
</dbReference>
<dbReference type="GO" id="GO:0006364">
    <property type="term" value="P:rRNA processing"/>
    <property type="evidence" value="ECO:0007669"/>
    <property type="project" value="UniProtKB-UniRule"/>
</dbReference>
<dbReference type="Gene3D" id="3.30.2300.20">
    <property type="match status" value="1"/>
</dbReference>
<dbReference type="Gene3D" id="3.30.70.2810">
    <property type="match status" value="1"/>
</dbReference>
<dbReference type="Gene3D" id="3.40.50.150">
    <property type="entry name" value="Vaccinia Virus protein VP39"/>
    <property type="match status" value="1"/>
</dbReference>
<dbReference type="HAMAP" id="MF_01551">
    <property type="entry name" value="23SrRNA_methyltr_M"/>
    <property type="match status" value="1"/>
</dbReference>
<dbReference type="InterPro" id="IPR040739">
    <property type="entry name" value="RlmM_FDX"/>
</dbReference>
<dbReference type="InterPro" id="IPR048646">
    <property type="entry name" value="RlmM_THUMP-like"/>
</dbReference>
<dbReference type="InterPro" id="IPR002877">
    <property type="entry name" value="RNA_MeTrfase_FtsJ_dom"/>
</dbReference>
<dbReference type="InterPro" id="IPR011224">
    <property type="entry name" value="rRNA_MeTrfase_M"/>
</dbReference>
<dbReference type="InterPro" id="IPR029063">
    <property type="entry name" value="SAM-dependent_MTases_sf"/>
</dbReference>
<dbReference type="NCBIfam" id="NF008734">
    <property type="entry name" value="PRK11760.1"/>
    <property type="match status" value="1"/>
</dbReference>
<dbReference type="PANTHER" id="PTHR37524">
    <property type="entry name" value="RIBOSOMAL RNA LARGE SUBUNIT METHYLTRANSFERASE M"/>
    <property type="match status" value="1"/>
</dbReference>
<dbReference type="PANTHER" id="PTHR37524:SF2">
    <property type="entry name" value="RIBOSOMAL RNA METHYLTRANSFERASE FTSJ DOMAIN-CONTAINING PROTEIN"/>
    <property type="match status" value="1"/>
</dbReference>
<dbReference type="Pfam" id="PF01728">
    <property type="entry name" value="FtsJ"/>
    <property type="match status" value="1"/>
</dbReference>
<dbReference type="Pfam" id="PF18125">
    <property type="entry name" value="RlmM_FDX"/>
    <property type="match status" value="1"/>
</dbReference>
<dbReference type="Pfam" id="PF21239">
    <property type="entry name" value="RLMM_N"/>
    <property type="match status" value="1"/>
</dbReference>
<dbReference type="PIRSF" id="PIRSF028774">
    <property type="entry name" value="UCP028774"/>
    <property type="match status" value="1"/>
</dbReference>
<dbReference type="SUPFAM" id="SSF53335">
    <property type="entry name" value="S-adenosyl-L-methionine-dependent methyltransferases"/>
    <property type="match status" value="1"/>
</dbReference>
<feature type="chain" id="PRO_0000314537" description="Ribosomal RNA large subunit methyltransferase M">
    <location>
        <begin position="1"/>
        <end position="362"/>
    </location>
</feature>
<feature type="active site" description="Proton acceptor" evidence="1">
    <location>
        <position position="305"/>
    </location>
</feature>
<feature type="binding site" evidence="1">
    <location>
        <position position="187"/>
    </location>
    <ligand>
        <name>S-adenosyl-L-methionine</name>
        <dbReference type="ChEBI" id="CHEBI:59789"/>
    </ligand>
</feature>
<feature type="binding site" evidence="1">
    <location>
        <begin position="220"/>
        <end position="223"/>
    </location>
    <ligand>
        <name>S-adenosyl-L-methionine</name>
        <dbReference type="ChEBI" id="CHEBI:59789"/>
    </ligand>
</feature>
<feature type="binding site" evidence="1">
    <location>
        <position position="239"/>
    </location>
    <ligand>
        <name>S-adenosyl-L-methionine</name>
        <dbReference type="ChEBI" id="CHEBI:59789"/>
    </ligand>
</feature>
<feature type="binding site" evidence="1">
    <location>
        <position position="259"/>
    </location>
    <ligand>
        <name>S-adenosyl-L-methionine</name>
        <dbReference type="ChEBI" id="CHEBI:59789"/>
    </ligand>
</feature>
<feature type="binding site" evidence="1">
    <location>
        <position position="276"/>
    </location>
    <ligand>
        <name>S-adenosyl-L-methionine</name>
        <dbReference type="ChEBI" id="CHEBI:59789"/>
    </ligand>
</feature>
<name>RLMM_SHEFN</name>
<accession>Q07ZE4</accession>
<sequence>MKNLFLFCRSGYEKDCAAEIQQRATELNVGGFVKTNINDAYVIYQCFDDNGADTLVKELALSSLVFARQMFAAGELLSDLPEQDRVGPIVASLAALSKCGELRVETPDTNEAKELSAFCRKLTVPLRQGLKKSGALLNAESDRRPIIHVCFIGPGKAYAGYSLSHNSSPHFMGIPRLRMAADAPSRSSLKLDEAFGAFLTKEEQETRCRSGLNAVDLGACPGGWTYQLVRRGMMVAAVDNGPMDPKLMETGQVKHYRADGFRFEPPRKNVYWLVCDMVEKPARVAELMEAWAINGWFKEAIFNLKLPMKSRYKEVSVILETIGAILTENEIDFKMQCKHLYHDRDEVTVHLWIFPEKGVSYA</sequence>
<evidence type="ECO:0000255" key="1">
    <source>
        <dbReference type="HAMAP-Rule" id="MF_01551"/>
    </source>
</evidence>
<proteinExistence type="inferred from homology"/>